<dbReference type="EMBL" id="AF084543">
    <property type="protein sequence ID" value="AAD42935.1"/>
    <property type="molecule type" value="Genomic_DNA"/>
</dbReference>
<dbReference type="SMR" id="Q9WRL5"/>
<dbReference type="GlyCosmos" id="Q9WRL5">
    <property type="glycosylation" value="9 sites, No reported glycans"/>
</dbReference>
<dbReference type="KEGG" id="vg:921130"/>
<dbReference type="GO" id="GO:0044175">
    <property type="term" value="C:host cell endosome membrane"/>
    <property type="evidence" value="ECO:0007669"/>
    <property type="project" value="UniProtKB-SubCell"/>
</dbReference>
<dbReference type="GO" id="GO:0044178">
    <property type="term" value="C:host cell Golgi membrane"/>
    <property type="evidence" value="ECO:0007669"/>
    <property type="project" value="UniProtKB-SubCell"/>
</dbReference>
<dbReference type="GO" id="GO:0020002">
    <property type="term" value="C:host cell plasma membrane"/>
    <property type="evidence" value="ECO:0007669"/>
    <property type="project" value="UniProtKB-SubCell"/>
</dbReference>
<dbReference type="GO" id="GO:0016020">
    <property type="term" value="C:membrane"/>
    <property type="evidence" value="ECO:0007669"/>
    <property type="project" value="UniProtKB-KW"/>
</dbReference>
<dbReference type="GO" id="GO:0019031">
    <property type="term" value="C:viral envelope"/>
    <property type="evidence" value="ECO:0007669"/>
    <property type="project" value="UniProtKB-KW"/>
</dbReference>
<dbReference type="GO" id="GO:0055036">
    <property type="term" value="C:virion membrane"/>
    <property type="evidence" value="ECO:0007669"/>
    <property type="project" value="UniProtKB-SubCell"/>
</dbReference>
<dbReference type="GO" id="GO:0046718">
    <property type="term" value="P:symbiont entry into host cell"/>
    <property type="evidence" value="ECO:0007669"/>
    <property type="project" value="UniProtKB-KW"/>
</dbReference>
<dbReference type="GO" id="GO:0019062">
    <property type="term" value="P:virion attachment to host cell"/>
    <property type="evidence" value="ECO:0007669"/>
    <property type="project" value="UniProtKB-KW"/>
</dbReference>
<dbReference type="Gene3D" id="1.20.5.1890">
    <property type="match status" value="1"/>
</dbReference>
<dbReference type="Gene3D" id="2.30.29.100">
    <property type="match status" value="1"/>
</dbReference>
<dbReference type="Gene3D" id="2.30.30.1230">
    <property type="match status" value="1"/>
</dbReference>
<dbReference type="Gene3D" id="6.10.250.3280">
    <property type="match status" value="1"/>
</dbReference>
<dbReference type="HAMAP" id="MF_04032">
    <property type="entry name" value="HSV_GB"/>
    <property type="match status" value="1"/>
</dbReference>
<dbReference type="InterPro" id="IPR035377">
    <property type="entry name" value="Glycoprot_B_PH1"/>
</dbReference>
<dbReference type="InterPro" id="IPR035381">
    <property type="entry name" value="Glycoprot_B_PH2"/>
</dbReference>
<dbReference type="InterPro" id="IPR038631">
    <property type="entry name" value="Glycoprot_B_PH2_sf"/>
</dbReference>
<dbReference type="InterPro" id="IPR055341">
    <property type="entry name" value="Glycoprotein_B_ecto_C"/>
</dbReference>
<dbReference type="InterPro" id="IPR000234">
    <property type="entry name" value="Herpes_Glycoprot_B"/>
</dbReference>
<dbReference type="Pfam" id="PF17416">
    <property type="entry name" value="Glycoprot_B_PH1"/>
    <property type="match status" value="1"/>
</dbReference>
<dbReference type="Pfam" id="PF17417">
    <property type="entry name" value="Glycoprot_B_PH2"/>
    <property type="match status" value="1"/>
</dbReference>
<dbReference type="Pfam" id="PF00606">
    <property type="entry name" value="Glycoprotein_B"/>
    <property type="match status" value="1"/>
</dbReference>
<dbReference type="SUPFAM" id="SSF161008">
    <property type="entry name" value="Viral glycoprotein ectodomain-like"/>
    <property type="match status" value="1"/>
</dbReference>
<keyword id="KW-1015">Disulfide bond</keyword>
<keyword id="KW-0325">Glycoprotein</keyword>
<keyword id="KW-1032">Host cell membrane</keyword>
<keyword id="KW-1039">Host endosome</keyword>
<keyword id="KW-1040">Host Golgi apparatus</keyword>
<keyword id="KW-1043">Host membrane</keyword>
<keyword id="KW-0945">Host-virus interaction</keyword>
<keyword id="KW-0472">Membrane</keyword>
<keyword id="KW-0732">Signal</keyword>
<keyword id="KW-0812">Transmembrane</keyword>
<keyword id="KW-1133">Transmembrane helix</keyword>
<keyword id="KW-1161">Viral attachment to host cell</keyword>
<keyword id="KW-0261">Viral envelope protein</keyword>
<keyword id="KW-0946">Virion</keyword>
<keyword id="KW-1160">Virus entry into host cell</keyword>
<name>GB_TUHV2</name>
<organism>
    <name type="scientific">Tupaiid herpesvirus (strain 2)</name>
    <name type="common">TuHV-2</name>
    <name type="synonym">Herpesvirus tupaia (strain 2)</name>
    <dbReference type="NCBI Taxonomy" id="132678"/>
    <lineage>
        <taxon>Viruses</taxon>
        <taxon>Duplodnaviria</taxon>
        <taxon>Heunggongvirae</taxon>
        <taxon>Peploviricota</taxon>
        <taxon>Herviviricetes</taxon>
        <taxon>Herpesvirales</taxon>
        <taxon>Orthoherpesviridae</taxon>
        <taxon>Betaherpesvirinae</taxon>
    </lineage>
</organism>
<accession>Q9WRL5</accession>
<feature type="signal peptide" evidence="1">
    <location>
        <begin position="1"/>
        <end position="55"/>
    </location>
</feature>
<feature type="chain" id="PRO_0000038184" description="Envelope glycoprotein B">
    <location>
        <begin position="56"/>
        <end position="944"/>
    </location>
</feature>
<feature type="topological domain" description="Virion surface" evidence="2">
    <location>
        <begin position="56"/>
        <end position="785"/>
    </location>
</feature>
<feature type="transmembrane region" description="Helical" evidence="2">
    <location>
        <begin position="786"/>
        <end position="806"/>
    </location>
</feature>
<feature type="topological domain" description="Intravirion" evidence="2">
    <location>
        <begin position="807"/>
        <end position="944"/>
    </location>
</feature>
<feature type="region of interest" description="Disordered" evidence="3">
    <location>
        <begin position="1"/>
        <end position="37"/>
    </location>
</feature>
<feature type="region of interest" description="Disordered" evidence="3">
    <location>
        <begin position="68"/>
        <end position="108"/>
    </location>
</feature>
<feature type="region of interest" description="Involved in fusion and/or binding to host membrane" evidence="2">
    <location>
        <begin position="182"/>
        <end position="188"/>
    </location>
</feature>
<feature type="region of interest" description="Involved in fusion and/or binding to host membrane" evidence="2">
    <location>
        <begin position="267"/>
        <end position="274"/>
    </location>
</feature>
<feature type="region of interest" description="Hydrophobic membrane proximal region" evidence="2">
    <location>
        <begin position="731"/>
        <end position="783"/>
    </location>
</feature>
<feature type="region of interest" description="Hydrophobic membrane proximal region">
    <location>
        <begin position="762"/>
        <end position="782"/>
    </location>
</feature>
<feature type="region of interest" description="Disordered" evidence="3">
    <location>
        <begin position="834"/>
        <end position="878"/>
    </location>
</feature>
<feature type="region of interest" description="Disordered" evidence="3">
    <location>
        <begin position="902"/>
        <end position="944"/>
    </location>
</feature>
<feature type="short sequence motif" description="Internalization motif" evidence="2">
    <location>
        <begin position="931"/>
        <end position="934"/>
    </location>
</feature>
<feature type="compositionally biased region" description="Low complexity" evidence="3">
    <location>
        <begin position="24"/>
        <end position="37"/>
    </location>
</feature>
<feature type="compositionally biased region" description="Gly residues" evidence="3">
    <location>
        <begin position="71"/>
        <end position="85"/>
    </location>
</feature>
<feature type="compositionally biased region" description="Polar residues" evidence="3">
    <location>
        <begin position="89"/>
        <end position="99"/>
    </location>
</feature>
<feature type="site" description="Cleavage; by host furin" evidence="1">
    <location>
        <begin position="491"/>
        <end position="492"/>
    </location>
</feature>
<feature type="glycosylation site" description="N-linked (GlcNAc...) asparagine; by host" evidence="2">
    <location>
        <position position="114"/>
    </location>
</feature>
<feature type="glycosylation site" description="N-linked (GlcNAc...) asparagine; by host" evidence="2">
    <location>
        <position position="238"/>
    </location>
</feature>
<feature type="glycosylation site" description="N-linked (GlcNAc...) asparagine; by host" evidence="2">
    <location>
        <position position="369"/>
    </location>
</feature>
<feature type="glycosylation site" description="N-linked (GlcNAc...) asparagine; by host" evidence="2">
    <location>
        <position position="409"/>
    </location>
</feature>
<feature type="glycosylation site" description="N-linked (GlcNAc...) asparagine; by host" evidence="2">
    <location>
        <position position="414"/>
    </location>
</feature>
<feature type="glycosylation site" description="N-linked (GlcNAc...) asparagine; by host" evidence="2">
    <location>
        <position position="426"/>
    </location>
</feature>
<feature type="glycosylation site" description="N-linked (GlcNAc...) asparagine; by host" evidence="2">
    <location>
        <position position="481"/>
    </location>
</feature>
<feature type="glycosylation site" description="N-linked (GlcNAc...) asparagine; by host" evidence="2">
    <location>
        <position position="485"/>
    </location>
</feature>
<feature type="glycosylation site" description="N-linked (GlcNAc...) asparagine; by host" evidence="2">
    <location>
        <position position="620"/>
    </location>
</feature>
<feature type="disulfide bond" evidence="2">
    <location>
        <begin position="125"/>
        <end position="577"/>
    </location>
</feature>
<feature type="disulfide bond" evidence="2">
    <location>
        <begin position="142"/>
        <end position="533"/>
    </location>
</feature>
<feature type="disulfide bond" evidence="2">
    <location>
        <begin position="215"/>
        <end position="280"/>
    </location>
</feature>
<feature type="disulfide bond" evidence="2">
    <location>
        <begin position="372"/>
        <end position="420"/>
    </location>
</feature>
<feature type="disulfide bond" evidence="2">
    <location>
        <begin position="608"/>
        <end position="645"/>
    </location>
</feature>
<protein>
    <recommendedName>
        <fullName evidence="2">Envelope glycoprotein B</fullName>
        <shortName evidence="2">gB</shortName>
    </recommendedName>
</protein>
<comment type="function">
    <text evidence="2">Envelope glycoprotein that forms spikes at the surface of virion envelope. Essential for the initial attachment to heparan sulfate moieties of the host cell surface proteoglycans. Involved in fusion of viral and cellular membranes leading to virus entry into the host cell. Following initial binding to its host receptors, membrane fusion is mediated by the fusion machinery composed at least of gB and the heterodimer gH/gL. May be involved in the fusion between the virion envelope and the outer nuclear membrane during virion egress.</text>
</comment>
<comment type="subunit">
    <text evidence="2">Homotrimer; disulfide-linked. Binds to heparan sulfate proteoglycans. Interacts with gH/gL heterodimer.</text>
</comment>
<comment type="subcellular location">
    <subcellularLocation>
        <location evidence="2">Virion membrane</location>
        <topology evidence="2">Single-pass type I membrane protein</topology>
    </subcellularLocation>
    <subcellularLocation>
        <location evidence="2">Host cell membrane</location>
        <topology evidence="2">Single-pass type I membrane protein</topology>
    </subcellularLocation>
    <subcellularLocation>
        <location evidence="2">Host endosome membrane</location>
        <topology evidence="2">Single-pass type I membrane protein</topology>
    </subcellularLocation>
    <subcellularLocation>
        <location evidence="2">Host Golgi apparatus membrane</location>
        <topology evidence="2">Single-pass type I membrane protein</topology>
    </subcellularLocation>
    <text evidence="2">During virion morphogenesis, this protein probably accumulates in the endosomes and trans-Golgi where secondary envelopment occurs. It is probably transported to the cell surface from where it is endocytosed and directed to the trans-Golgi network (TGN).</text>
</comment>
<comment type="PTM">
    <text evidence="4">A proteolytic cleavage by host furin generates two subunits that remain linked by disulfide bonds.</text>
</comment>
<comment type="similarity">
    <text evidence="2">Belongs to the herpesviridae glycoprotein B family.</text>
</comment>
<proteinExistence type="inferred from homology"/>
<reference key="1">
    <citation type="journal article" date="1999" name="Virus Res.">
        <title>Structural organization of a conserved gene cluster of Tupaia herpesvirus encoding the DNA polymerase, glycoprotein B, a probable processing and transport protein, and the major DNA binding protein.</title>
        <authorList>
            <person name="Bahr U."/>
            <person name="Springfeld C."/>
            <person name="Tidona C.A."/>
            <person name="Darai G."/>
        </authorList>
    </citation>
    <scope>NUCLEOTIDE SEQUENCE [GENOMIC DNA]</scope>
</reference>
<sequence>MGPPPPLRRQRLLLPRPSRRRPPARLASGRRSSRPGSSWTWYATLIASLVWYPTVSSTTLEATVVSSTDGGATGQASGGGGGGAGDSTPSESPETSADTTVPRERVTGTEWVSNLTSERYPYRICSMSQGTDIVRFARTITCAPYDAKSVSTEGIMLIYKANIVPYTFDVFTYQKELFFQRSYAYIYTTYLLGNSREHVALPLWEVDAANIWNYCYSSYVRTIGTEQYVSYHQDSYRNETMWLIPEEYQSGNTRRYVTVKDQYHVYGSTWLYKETCSMNCIVTQTKAKSKYPYDYFALSSGLVVEASPFYDTVNGHTFHENRRKFHVREQYRMLERFGAVNAPVRVVPKMAFLERPDIVLAWEIKEPKNVTCHLALWETVNRAIRTEHATSFHFVSRGLTATFVTAKANETLYNNSRYDCIRDSANRTIDRVFREEYDGKYELDGDPVIFTTNGGLTVVWQGLRQKALAALSALAGIPGANGTTNHSRHRRDTAAIAAREHASDLTYAQLQFAYDTIRDYVNQAIGHIAEAWCLEQRRTGEMLHELSKINPSSMLTAIYDRPIAARLAGDVIALAKCVEVDQDTVQVQRDMRKFETSVDGTEEQGQFCYSRPVVLFRFVNSSETQYGQLGEDNEILLGTFRTEACQLPSLKIFVAGKVAYEYRDYLYKRQIDLDSIDVVNTMISLKVEPLENTDFQVLELYSRGELKSANVFDLEDIMREYNAHKLRLRYITSKIVNPIPPFMRGLDDFMSGLGAAGKGLGLVLGAVGGAVASVVGGFVSFFTNPFGSLTLIILVVAVVVIVFLLYQRQRSAVRQPLDFFFPYLAQQTQRHQQTVTTTEYLDSPPPYAERDSYKSGPPDPAAEGLGGSGALPGSSATAATKYTTEDAWQMLLAIRRLDEEKREVPTMVAPSARPPSQQGPGLLDRIRRRGYRRLRDTGSDSELA</sequence>
<organismHost>
    <name type="scientific">Tupaia belangeri</name>
    <name type="common">Common tree shrew</name>
    <name type="synonym">Tupaia glis belangeri</name>
    <dbReference type="NCBI Taxonomy" id="37347"/>
</organismHost>
<gene>
    <name evidence="2" type="primary">gB</name>
</gene>
<evidence type="ECO:0000255" key="1"/>
<evidence type="ECO:0000255" key="2">
    <source>
        <dbReference type="HAMAP-Rule" id="MF_04032"/>
    </source>
</evidence>
<evidence type="ECO:0000256" key="3">
    <source>
        <dbReference type="SAM" id="MobiDB-lite"/>
    </source>
</evidence>
<evidence type="ECO:0000305" key="4"/>